<proteinExistence type="inferred from homology"/>
<sequence length="485" mass="51261">MPRFVDRVVIHARAGNGGNGCASVHREKFKPLGGPDGGNGGRGGSVILVVDPQVHTLLDFHFHPHVVAPSGKPGAGSNRDGAAGIDLEVRVPDGTVVLDENGRMLADLVGAGTRFEAAAGGRGGLGNAALASRARKAPGFALLGEKGQERDLTLELKTVADVGLIGFPSAGKSSLVSTISAAKPKIADYPFTTLVPNLGVVSAGENTYTVADVPGLIPGASEGRGLGLDFLRHLERCAVLVHVVDCATMEPGRDPISDIEALEAELAAYTPTLQGDSALGDLASRPRAVVLNKIDVPDARELADFVRDEVAGRFGWPVYEISTVSRDGLRPLIFALWEMVKKYRDAQPVAAPRRPIIRPIPVDESGFTISSDGEGGFIVRGTRPERWIAQTDFNNDEAVGYLGDRLARLGVEDELLKRGAKPGCAVTIGDVTFDWEPQTPAGVDVTMTGRGTDIRLEQTDRVGAAERKAARRERRQPGESGGEDS</sequence>
<name>OBG_MYCS2</name>
<protein>
    <recommendedName>
        <fullName evidence="1">GTPase Obg</fullName>
        <ecNumber evidence="1">3.6.5.-</ecNumber>
    </recommendedName>
    <alternativeName>
        <fullName evidence="1">GTP-binding protein Obg</fullName>
    </alternativeName>
</protein>
<feature type="chain" id="PRO_0000386058" description="GTPase Obg">
    <location>
        <begin position="1"/>
        <end position="485"/>
    </location>
</feature>
<feature type="domain" description="Obg" evidence="3">
    <location>
        <begin position="2"/>
        <end position="159"/>
    </location>
</feature>
<feature type="domain" description="OBG-type G" evidence="1">
    <location>
        <begin position="160"/>
        <end position="341"/>
    </location>
</feature>
<feature type="domain" description="OCT" evidence="2">
    <location>
        <begin position="359"/>
        <end position="437"/>
    </location>
</feature>
<feature type="region of interest" description="Disordered" evidence="4">
    <location>
        <begin position="450"/>
        <end position="485"/>
    </location>
</feature>
<feature type="compositionally biased region" description="Basic and acidic residues" evidence="4">
    <location>
        <begin position="452"/>
        <end position="468"/>
    </location>
</feature>
<feature type="binding site" evidence="1">
    <location>
        <begin position="166"/>
        <end position="173"/>
    </location>
    <ligand>
        <name>GTP</name>
        <dbReference type="ChEBI" id="CHEBI:37565"/>
    </ligand>
</feature>
<feature type="binding site" evidence="1">
    <location>
        <position position="173"/>
    </location>
    <ligand>
        <name>Mg(2+)</name>
        <dbReference type="ChEBI" id="CHEBI:18420"/>
    </ligand>
</feature>
<feature type="binding site" evidence="1">
    <location>
        <begin position="191"/>
        <end position="195"/>
    </location>
    <ligand>
        <name>GTP</name>
        <dbReference type="ChEBI" id="CHEBI:37565"/>
    </ligand>
</feature>
<feature type="binding site" evidence="1">
    <location>
        <position position="193"/>
    </location>
    <ligand>
        <name>Mg(2+)</name>
        <dbReference type="ChEBI" id="CHEBI:18420"/>
    </ligand>
</feature>
<feature type="binding site" evidence="1">
    <location>
        <begin position="212"/>
        <end position="215"/>
    </location>
    <ligand>
        <name>GTP</name>
        <dbReference type="ChEBI" id="CHEBI:37565"/>
    </ligand>
</feature>
<feature type="binding site" evidence="1">
    <location>
        <begin position="292"/>
        <end position="295"/>
    </location>
    <ligand>
        <name>GTP</name>
        <dbReference type="ChEBI" id="CHEBI:37565"/>
    </ligand>
</feature>
<feature type="binding site" evidence="1">
    <location>
        <begin position="322"/>
        <end position="324"/>
    </location>
    <ligand>
        <name>GTP</name>
        <dbReference type="ChEBI" id="CHEBI:37565"/>
    </ligand>
</feature>
<organism>
    <name type="scientific">Mycolicibacterium smegmatis (strain ATCC 700084 / mc(2)155)</name>
    <name type="common">Mycobacterium smegmatis</name>
    <dbReference type="NCBI Taxonomy" id="246196"/>
    <lineage>
        <taxon>Bacteria</taxon>
        <taxon>Bacillati</taxon>
        <taxon>Actinomycetota</taxon>
        <taxon>Actinomycetes</taxon>
        <taxon>Mycobacteriales</taxon>
        <taxon>Mycobacteriaceae</taxon>
        <taxon>Mycolicibacterium</taxon>
    </lineage>
</organism>
<reference key="1">
    <citation type="submission" date="2006-10" db="EMBL/GenBank/DDBJ databases">
        <authorList>
            <person name="Fleischmann R.D."/>
            <person name="Dodson R.J."/>
            <person name="Haft D.H."/>
            <person name="Merkel J.S."/>
            <person name="Nelson W.C."/>
            <person name="Fraser C.M."/>
        </authorList>
    </citation>
    <scope>NUCLEOTIDE SEQUENCE [LARGE SCALE GENOMIC DNA]</scope>
    <source>
        <strain>ATCC 700084 / mc(2)155</strain>
    </source>
</reference>
<reference key="2">
    <citation type="journal article" date="2007" name="Genome Biol.">
        <title>Interrupted coding sequences in Mycobacterium smegmatis: authentic mutations or sequencing errors?</title>
        <authorList>
            <person name="Deshayes C."/>
            <person name="Perrodou E."/>
            <person name="Gallien S."/>
            <person name="Euphrasie D."/>
            <person name="Schaeffer C."/>
            <person name="Van-Dorsselaer A."/>
            <person name="Poch O."/>
            <person name="Lecompte O."/>
            <person name="Reyrat J.-M."/>
        </authorList>
    </citation>
    <scope>NUCLEOTIDE SEQUENCE [LARGE SCALE GENOMIC DNA]</scope>
    <source>
        <strain>ATCC 700084 / mc(2)155</strain>
    </source>
</reference>
<reference key="3">
    <citation type="journal article" date="2009" name="Genome Res.">
        <title>Ortho-proteogenomics: multiple proteomes investigation through orthology and a new MS-based protocol.</title>
        <authorList>
            <person name="Gallien S."/>
            <person name="Perrodou E."/>
            <person name="Carapito C."/>
            <person name="Deshayes C."/>
            <person name="Reyrat J.-M."/>
            <person name="Van Dorsselaer A."/>
            <person name="Poch O."/>
            <person name="Schaeffer C."/>
            <person name="Lecompte O."/>
        </authorList>
    </citation>
    <scope>NUCLEOTIDE SEQUENCE [LARGE SCALE GENOMIC DNA]</scope>
    <source>
        <strain>ATCC 700084 / mc(2)155</strain>
    </source>
</reference>
<comment type="function">
    <text evidence="1">An essential GTPase which binds GTP, GDP and possibly (p)ppGpp with moderate affinity, with high nucleotide exchange rates and a fairly low GTP hydrolysis rate. Plays a role in control of the cell cycle, stress response, ribosome biogenesis and in those bacteria that undergo differentiation, in morphogenesis control.</text>
</comment>
<comment type="cofactor">
    <cofactor evidence="1">
        <name>Mg(2+)</name>
        <dbReference type="ChEBI" id="CHEBI:18420"/>
    </cofactor>
</comment>
<comment type="subunit">
    <text evidence="1">Monomer.</text>
</comment>
<comment type="subcellular location">
    <subcellularLocation>
        <location evidence="1">Cytoplasm</location>
    </subcellularLocation>
</comment>
<comment type="similarity">
    <text evidence="1">Belongs to the TRAFAC class OBG-HflX-like GTPase superfamily. OBG GTPase family.</text>
</comment>
<dbReference type="EC" id="3.6.5.-" evidence="1"/>
<dbReference type="EMBL" id="CP000480">
    <property type="protein sequence ID" value="ABK73963.1"/>
    <property type="molecule type" value="Genomic_DNA"/>
</dbReference>
<dbReference type="EMBL" id="CP001663">
    <property type="protein sequence ID" value="AFP40960.1"/>
    <property type="molecule type" value="Genomic_DNA"/>
</dbReference>
<dbReference type="RefSeq" id="YP_888887.1">
    <property type="nucleotide sequence ID" value="NC_008596.1"/>
</dbReference>
<dbReference type="SMR" id="A0R149"/>
<dbReference type="STRING" id="246196.MSMEG_4623"/>
<dbReference type="PaxDb" id="246196-MSMEI_4506"/>
<dbReference type="KEGG" id="msb:LJ00_22865"/>
<dbReference type="KEGG" id="msg:MSMEI_4506"/>
<dbReference type="KEGG" id="msm:MSMEG_4623"/>
<dbReference type="PATRIC" id="fig|246196.19.peg.4518"/>
<dbReference type="eggNOG" id="COG0536">
    <property type="taxonomic scope" value="Bacteria"/>
</dbReference>
<dbReference type="OrthoDB" id="9807318at2"/>
<dbReference type="Proteomes" id="UP000000757">
    <property type="component" value="Chromosome"/>
</dbReference>
<dbReference type="Proteomes" id="UP000006158">
    <property type="component" value="Chromosome"/>
</dbReference>
<dbReference type="GO" id="GO:0005737">
    <property type="term" value="C:cytoplasm"/>
    <property type="evidence" value="ECO:0007669"/>
    <property type="project" value="UniProtKB-SubCell"/>
</dbReference>
<dbReference type="GO" id="GO:0005525">
    <property type="term" value="F:GTP binding"/>
    <property type="evidence" value="ECO:0007669"/>
    <property type="project" value="UniProtKB-UniRule"/>
</dbReference>
<dbReference type="GO" id="GO:0003924">
    <property type="term" value="F:GTPase activity"/>
    <property type="evidence" value="ECO:0007669"/>
    <property type="project" value="UniProtKB-UniRule"/>
</dbReference>
<dbReference type="GO" id="GO:0000287">
    <property type="term" value="F:magnesium ion binding"/>
    <property type="evidence" value="ECO:0007669"/>
    <property type="project" value="InterPro"/>
</dbReference>
<dbReference type="GO" id="GO:0042254">
    <property type="term" value="P:ribosome biogenesis"/>
    <property type="evidence" value="ECO:0007669"/>
    <property type="project" value="UniProtKB-UniRule"/>
</dbReference>
<dbReference type="CDD" id="cd01898">
    <property type="entry name" value="Obg"/>
    <property type="match status" value="1"/>
</dbReference>
<dbReference type="FunFam" id="2.70.210.12:FF:000001">
    <property type="entry name" value="GTPase Obg"/>
    <property type="match status" value="1"/>
</dbReference>
<dbReference type="Gene3D" id="3.30.300.350">
    <property type="entry name" value="GTP-binding protein OBG, C-terminal domain"/>
    <property type="match status" value="1"/>
</dbReference>
<dbReference type="Gene3D" id="2.70.210.12">
    <property type="entry name" value="GTP1/OBG domain"/>
    <property type="match status" value="1"/>
</dbReference>
<dbReference type="Gene3D" id="3.40.50.300">
    <property type="entry name" value="P-loop containing nucleotide triphosphate hydrolases"/>
    <property type="match status" value="1"/>
</dbReference>
<dbReference type="HAMAP" id="MF_01454">
    <property type="entry name" value="GTPase_Obg"/>
    <property type="match status" value="1"/>
</dbReference>
<dbReference type="InterPro" id="IPR031167">
    <property type="entry name" value="G_OBG"/>
</dbReference>
<dbReference type="InterPro" id="IPR006073">
    <property type="entry name" value="GTP-bd"/>
</dbReference>
<dbReference type="InterPro" id="IPR014100">
    <property type="entry name" value="GTP-bd_Obg/CgtA"/>
</dbReference>
<dbReference type="InterPro" id="IPR036346">
    <property type="entry name" value="GTP-bd_prot_GTP1/OBG_C_sf"/>
</dbReference>
<dbReference type="InterPro" id="IPR006074">
    <property type="entry name" value="GTP1-OBG_CS"/>
</dbReference>
<dbReference type="InterPro" id="IPR006169">
    <property type="entry name" value="GTP1_OBG_dom"/>
</dbReference>
<dbReference type="InterPro" id="IPR036726">
    <property type="entry name" value="GTP1_OBG_dom_sf"/>
</dbReference>
<dbReference type="InterPro" id="IPR045086">
    <property type="entry name" value="OBG_GTPase"/>
</dbReference>
<dbReference type="InterPro" id="IPR015349">
    <property type="entry name" value="OCT_dom"/>
</dbReference>
<dbReference type="InterPro" id="IPR027417">
    <property type="entry name" value="P-loop_NTPase"/>
</dbReference>
<dbReference type="NCBIfam" id="TIGR02729">
    <property type="entry name" value="Obg_CgtA"/>
    <property type="match status" value="1"/>
</dbReference>
<dbReference type="NCBIfam" id="TIGR03595">
    <property type="entry name" value="Obg_CgtA_exten"/>
    <property type="match status" value="1"/>
</dbReference>
<dbReference type="NCBIfam" id="NF008954">
    <property type="entry name" value="PRK12296.1"/>
    <property type="match status" value="1"/>
</dbReference>
<dbReference type="NCBIfam" id="NF008955">
    <property type="entry name" value="PRK12297.1"/>
    <property type="match status" value="1"/>
</dbReference>
<dbReference type="NCBIfam" id="NF008956">
    <property type="entry name" value="PRK12299.1"/>
    <property type="match status" value="1"/>
</dbReference>
<dbReference type="PANTHER" id="PTHR11702">
    <property type="entry name" value="DEVELOPMENTALLY REGULATED GTP-BINDING PROTEIN-RELATED"/>
    <property type="match status" value="1"/>
</dbReference>
<dbReference type="PANTHER" id="PTHR11702:SF31">
    <property type="entry name" value="MITOCHONDRIAL RIBOSOME-ASSOCIATED GTPASE 2"/>
    <property type="match status" value="1"/>
</dbReference>
<dbReference type="Pfam" id="PF09269">
    <property type="entry name" value="DUF1967"/>
    <property type="match status" value="1"/>
</dbReference>
<dbReference type="Pfam" id="PF01018">
    <property type="entry name" value="GTP1_OBG"/>
    <property type="match status" value="1"/>
</dbReference>
<dbReference type="Pfam" id="PF01926">
    <property type="entry name" value="MMR_HSR1"/>
    <property type="match status" value="1"/>
</dbReference>
<dbReference type="PRINTS" id="PR00326">
    <property type="entry name" value="GTP1OBG"/>
</dbReference>
<dbReference type="SUPFAM" id="SSF102741">
    <property type="entry name" value="Obg GTP-binding protein C-terminal domain"/>
    <property type="match status" value="1"/>
</dbReference>
<dbReference type="SUPFAM" id="SSF82051">
    <property type="entry name" value="Obg GTP-binding protein N-terminal domain"/>
    <property type="match status" value="1"/>
</dbReference>
<dbReference type="SUPFAM" id="SSF52540">
    <property type="entry name" value="P-loop containing nucleoside triphosphate hydrolases"/>
    <property type="match status" value="1"/>
</dbReference>
<dbReference type="PROSITE" id="PS51710">
    <property type="entry name" value="G_OBG"/>
    <property type="match status" value="1"/>
</dbReference>
<dbReference type="PROSITE" id="PS00905">
    <property type="entry name" value="GTP1_OBG"/>
    <property type="match status" value="1"/>
</dbReference>
<dbReference type="PROSITE" id="PS51883">
    <property type="entry name" value="OBG"/>
    <property type="match status" value="1"/>
</dbReference>
<dbReference type="PROSITE" id="PS51881">
    <property type="entry name" value="OCT"/>
    <property type="match status" value="1"/>
</dbReference>
<evidence type="ECO:0000255" key="1">
    <source>
        <dbReference type="HAMAP-Rule" id="MF_01454"/>
    </source>
</evidence>
<evidence type="ECO:0000255" key="2">
    <source>
        <dbReference type="PROSITE-ProRule" id="PRU01229"/>
    </source>
</evidence>
<evidence type="ECO:0000255" key="3">
    <source>
        <dbReference type="PROSITE-ProRule" id="PRU01231"/>
    </source>
</evidence>
<evidence type="ECO:0000256" key="4">
    <source>
        <dbReference type="SAM" id="MobiDB-lite"/>
    </source>
</evidence>
<accession>A0R149</accession>
<accession>I7FHW1</accession>
<gene>
    <name evidence="1" type="primary">obg</name>
    <name type="ordered locus">MSMEG_4623</name>
    <name type="ordered locus">MSMEI_4506</name>
</gene>
<keyword id="KW-0963">Cytoplasm</keyword>
<keyword id="KW-0342">GTP-binding</keyword>
<keyword id="KW-0378">Hydrolase</keyword>
<keyword id="KW-0460">Magnesium</keyword>
<keyword id="KW-0479">Metal-binding</keyword>
<keyword id="KW-0547">Nucleotide-binding</keyword>
<keyword id="KW-1185">Reference proteome</keyword>